<evidence type="ECO:0000255" key="1">
    <source>
        <dbReference type="HAMAP-Rule" id="MF_00009"/>
    </source>
</evidence>
<accession>Q1WTU0</accession>
<sequence length="159" mass="18368">MDLEIFDDTNSVPAEKIQLVKDVLEFSGKYLELPEDTEMSVTLMNNEQIHEINLKYRGVDKATDVISFAIEEDDPDELPIILPDDVDFEEPKNIGDMMISMDKVKEQAEYLGHSEDRELGFLTVHGFLHLNGYDHMKAEDEKVMFKLQRDILDAYGLKR</sequence>
<feature type="chain" id="PRO_0000284229" description="Endoribonuclease YbeY">
    <location>
        <begin position="1"/>
        <end position="159"/>
    </location>
</feature>
<feature type="binding site" evidence="1">
    <location>
        <position position="125"/>
    </location>
    <ligand>
        <name>Zn(2+)</name>
        <dbReference type="ChEBI" id="CHEBI:29105"/>
        <note>catalytic</note>
    </ligand>
</feature>
<feature type="binding site" evidence="1">
    <location>
        <position position="129"/>
    </location>
    <ligand>
        <name>Zn(2+)</name>
        <dbReference type="ChEBI" id="CHEBI:29105"/>
        <note>catalytic</note>
    </ligand>
</feature>
<feature type="binding site" evidence="1">
    <location>
        <position position="135"/>
    </location>
    <ligand>
        <name>Zn(2+)</name>
        <dbReference type="ChEBI" id="CHEBI:29105"/>
        <note>catalytic</note>
    </ligand>
</feature>
<keyword id="KW-0963">Cytoplasm</keyword>
<keyword id="KW-0255">Endonuclease</keyword>
<keyword id="KW-0378">Hydrolase</keyword>
<keyword id="KW-0479">Metal-binding</keyword>
<keyword id="KW-0540">Nuclease</keyword>
<keyword id="KW-1185">Reference proteome</keyword>
<keyword id="KW-0690">Ribosome biogenesis</keyword>
<keyword id="KW-0698">rRNA processing</keyword>
<keyword id="KW-0862">Zinc</keyword>
<dbReference type="EC" id="3.1.-.-" evidence="1"/>
<dbReference type="EMBL" id="CP000233">
    <property type="protein sequence ID" value="ABD99707.1"/>
    <property type="molecule type" value="Genomic_DNA"/>
</dbReference>
<dbReference type="RefSeq" id="WP_003710168.1">
    <property type="nucleotide sequence ID" value="NC_007929.1"/>
</dbReference>
<dbReference type="RefSeq" id="YP_535790.1">
    <property type="nucleotide sequence ID" value="NC_007929.1"/>
</dbReference>
<dbReference type="SMR" id="Q1WTU0"/>
<dbReference type="STRING" id="362948.LSL_0897"/>
<dbReference type="KEGG" id="lsl:LSL_0897"/>
<dbReference type="PATRIC" id="fig|362948.14.peg.972"/>
<dbReference type="HOGENOM" id="CLU_106710_3_0_9"/>
<dbReference type="OrthoDB" id="9807740at2"/>
<dbReference type="Proteomes" id="UP000006559">
    <property type="component" value="Chromosome"/>
</dbReference>
<dbReference type="GO" id="GO:0005737">
    <property type="term" value="C:cytoplasm"/>
    <property type="evidence" value="ECO:0007669"/>
    <property type="project" value="UniProtKB-SubCell"/>
</dbReference>
<dbReference type="GO" id="GO:0004222">
    <property type="term" value="F:metalloendopeptidase activity"/>
    <property type="evidence" value="ECO:0007669"/>
    <property type="project" value="InterPro"/>
</dbReference>
<dbReference type="GO" id="GO:0004521">
    <property type="term" value="F:RNA endonuclease activity"/>
    <property type="evidence" value="ECO:0007669"/>
    <property type="project" value="UniProtKB-UniRule"/>
</dbReference>
<dbReference type="GO" id="GO:0008270">
    <property type="term" value="F:zinc ion binding"/>
    <property type="evidence" value="ECO:0007669"/>
    <property type="project" value="UniProtKB-UniRule"/>
</dbReference>
<dbReference type="GO" id="GO:0006364">
    <property type="term" value="P:rRNA processing"/>
    <property type="evidence" value="ECO:0007669"/>
    <property type="project" value="UniProtKB-UniRule"/>
</dbReference>
<dbReference type="Gene3D" id="3.40.390.30">
    <property type="entry name" value="Metalloproteases ('zincins'), catalytic domain"/>
    <property type="match status" value="1"/>
</dbReference>
<dbReference type="HAMAP" id="MF_00009">
    <property type="entry name" value="Endoribonucl_YbeY"/>
    <property type="match status" value="1"/>
</dbReference>
<dbReference type="InterPro" id="IPR023091">
    <property type="entry name" value="MetalPrtase_cat_dom_sf_prd"/>
</dbReference>
<dbReference type="InterPro" id="IPR002036">
    <property type="entry name" value="YbeY"/>
</dbReference>
<dbReference type="InterPro" id="IPR020549">
    <property type="entry name" value="YbeY_CS"/>
</dbReference>
<dbReference type="NCBIfam" id="TIGR00043">
    <property type="entry name" value="rRNA maturation RNase YbeY"/>
    <property type="match status" value="1"/>
</dbReference>
<dbReference type="PANTHER" id="PTHR46986">
    <property type="entry name" value="ENDORIBONUCLEASE YBEY, CHLOROPLASTIC"/>
    <property type="match status" value="1"/>
</dbReference>
<dbReference type="PANTHER" id="PTHR46986:SF1">
    <property type="entry name" value="ENDORIBONUCLEASE YBEY, CHLOROPLASTIC"/>
    <property type="match status" value="1"/>
</dbReference>
<dbReference type="Pfam" id="PF02130">
    <property type="entry name" value="YbeY"/>
    <property type="match status" value="1"/>
</dbReference>
<dbReference type="SUPFAM" id="SSF55486">
    <property type="entry name" value="Metalloproteases ('zincins'), catalytic domain"/>
    <property type="match status" value="1"/>
</dbReference>
<dbReference type="PROSITE" id="PS01306">
    <property type="entry name" value="UPF0054"/>
    <property type="match status" value="1"/>
</dbReference>
<name>YBEY_LIGS1</name>
<organism>
    <name type="scientific">Ligilactobacillus salivarius (strain UCC118)</name>
    <name type="common">Lactobacillus salivarius</name>
    <dbReference type="NCBI Taxonomy" id="362948"/>
    <lineage>
        <taxon>Bacteria</taxon>
        <taxon>Bacillati</taxon>
        <taxon>Bacillota</taxon>
        <taxon>Bacilli</taxon>
        <taxon>Lactobacillales</taxon>
        <taxon>Lactobacillaceae</taxon>
        <taxon>Ligilactobacillus</taxon>
    </lineage>
</organism>
<proteinExistence type="inferred from homology"/>
<protein>
    <recommendedName>
        <fullName evidence="1">Endoribonuclease YbeY</fullName>
        <ecNumber evidence="1">3.1.-.-</ecNumber>
    </recommendedName>
</protein>
<comment type="function">
    <text evidence="1">Single strand-specific metallo-endoribonuclease involved in late-stage 70S ribosome quality control and in maturation of the 3' terminus of the 16S rRNA.</text>
</comment>
<comment type="cofactor">
    <cofactor evidence="1">
        <name>Zn(2+)</name>
        <dbReference type="ChEBI" id="CHEBI:29105"/>
    </cofactor>
    <text evidence="1">Binds 1 zinc ion.</text>
</comment>
<comment type="subcellular location">
    <subcellularLocation>
        <location evidence="1">Cytoplasm</location>
    </subcellularLocation>
</comment>
<comment type="similarity">
    <text evidence="1">Belongs to the endoribonuclease YbeY family.</text>
</comment>
<gene>
    <name evidence="1" type="primary">ybeY</name>
    <name type="ordered locus">LSL_0897</name>
</gene>
<reference key="1">
    <citation type="journal article" date="2006" name="Proc. Natl. Acad. Sci. U.S.A.">
        <title>Multireplicon genome architecture of Lactobacillus salivarius.</title>
        <authorList>
            <person name="Claesson M.J."/>
            <person name="Li Y."/>
            <person name="Leahy S."/>
            <person name="Canchaya C."/>
            <person name="van Pijkeren J.P."/>
            <person name="Cerdeno-Tarraga A.M."/>
            <person name="Parkhill J."/>
            <person name="Flynn S."/>
            <person name="O'Sullivan G.C."/>
            <person name="Collins J.K."/>
            <person name="Higgins D."/>
            <person name="Shanahan F."/>
            <person name="Fitzgerald G.F."/>
            <person name="van Sinderen D."/>
            <person name="O'Toole P.W."/>
        </authorList>
    </citation>
    <scope>NUCLEOTIDE SEQUENCE [LARGE SCALE GENOMIC DNA]</scope>
    <source>
        <strain>UCC118</strain>
    </source>
</reference>